<feature type="chain" id="PRO_0000189507" description="2-C-methyl-D-erythritol 2,4-cyclodiphosphate synthase">
    <location>
        <begin position="1"/>
        <end position="161"/>
    </location>
</feature>
<feature type="binding site" evidence="1">
    <location>
        <begin position="11"/>
        <end position="13"/>
    </location>
    <ligand>
        <name>4-CDP-2-C-methyl-D-erythritol 2-phosphate</name>
        <dbReference type="ChEBI" id="CHEBI:57919"/>
    </ligand>
</feature>
<feature type="binding site" evidence="1">
    <location>
        <position position="11"/>
    </location>
    <ligand>
        <name>a divalent metal cation</name>
        <dbReference type="ChEBI" id="CHEBI:60240"/>
    </ligand>
</feature>
<feature type="binding site" evidence="1">
    <location>
        <position position="13"/>
    </location>
    <ligand>
        <name>a divalent metal cation</name>
        <dbReference type="ChEBI" id="CHEBI:60240"/>
    </ligand>
</feature>
<feature type="binding site" evidence="1">
    <location>
        <begin position="37"/>
        <end position="38"/>
    </location>
    <ligand>
        <name>4-CDP-2-C-methyl-D-erythritol 2-phosphate</name>
        <dbReference type="ChEBI" id="CHEBI:57919"/>
    </ligand>
</feature>
<feature type="binding site" evidence="1">
    <location>
        <position position="45"/>
    </location>
    <ligand>
        <name>a divalent metal cation</name>
        <dbReference type="ChEBI" id="CHEBI:60240"/>
    </ligand>
</feature>
<feature type="binding site" evidence="1">
    <location>
        <begin position="59"/>
        <end position="61"/>
    </location>
    <ligand>
        <name>4-CDP-2-C-methyl-D-erythritol 2-phosphate</name>
        <dbReference type="ChEBI" id="CHEBI:57919"/>
    </ligand>
</feature>
<feature type="binding site" evidence="1">
    <location>
        <begin position="135"/>
        <end position="138"/>
    </location>
    <ligand>
        <name>4-CDP-2-C-methyl-D-erythritol 2-phosphate</name>
        <dbReference type="ChEBI" id="CHEBI:57919"/>
    </ligand>
</feature>
<feature type="binding site" evidence="1">
    <location>
        <position position="145"/>
    </location>
    <ligand>
        <name>4-CDP-2-C-methyl-D-erythritol 2-phosphate</name>
        <dbReference type="ChEBI" id="CHEBI:57919"/>
    </ligand>
</feature>
<feature type="site" description="Transition state stabilizer" evidence="1">
    <location>
        <position position="37"/>
    </location>
</feature>
<feature type="site" description="Transition state stabilizer" evidence="1">
    <location>
        <position position="136"/>
    </location>
</feature>
<name>ISPF_THEVB</name>
<proteinExistence type="inferred from homology"/>
<reference key="1">
    <citation type="journal article" date="2002" name="DNA Res.">
        <title>Complete genome structure of the thermophilic cyanobacterium Thermosynechococcus elongatus BP-1.</title>
        <authorList>
            <person name="Nakamura Y."/>
            <person name="Kaneko T."/>
            <person name="Sato S."/>
            <person name="Ikeuchi M."/>
            <person name="Katoh H."/>
            <person name="Sasamoto S."/>
            <person name="Watanabe A."/>
            <person name="Iriguchi M."/>
            <person name="Kawashima K."/>
            <person name="Kimura T."/>
            <person name="Kishida Y."/>
            <person name="Kiyokawa C."/>
            <person name="Kohara M."/>
            <person name="Matsumoto M."/>
            <person name="Matsuno A."/>
            <person name="Nakazaki N."/>
            <person name="Shimpo S."/>
            <person name="Sugimoto M."/>
            <person name="Takeuchi C."/>
            <person name="Yamada M."/>
            <person name="Tabata S."/>
        </authorList>
    </citation>
    <scope>NUCLEOTIDE SEQUENCE [LARGE SCALE GENOMIC DNA]</scope>
    <source>
        <strain>NIES-2133 / IAM M-273 / BP-1</strain>
    </source>
</reference>
<comment type="function">
    <text evidence="1">Involved in the biosynthesis of isopentenyl diphosphate (IPP) and dimethylallyl diphosphate (DMAPP), two major building blocks of isoprenoid compounds. Catalyzes the conversion of 4-diphosphocytidyl-2-C-methyl-D-erythritol 2-phosphate (CDP-ME2P) to 2-C-methyl-D-erythritol 2,4-cyclodiphosphate (ME-CPP) with a corresponding release of cytidine 5-monophosphate (CMP).</text>
</comment>
<comment type="catalytic activity">
    <reaction evidence="1">
        <text>4-CDP-2-C-methyl-D-erythritol 2-phosphate = 2-C-methyl-D-erythritol 2,4-cyclic diphosphate + CMP</text>
        <dbReference type="Rhea" id="RHEA:23864"/>
        <dbReference type="ChEBI" id="CHEBI:57919"/>
        <dbReference type="ChEBI" id="CHEBI:58483"/>
        <dbReference type="ChEBI" id="CHEBI:60377"/>
        <dbReference type="EC" id="4.6.1.12"/>
    </reaction>
</comment>
<comment type="cofactor">
    <cofactor evidence="1">
        <name>a divalent metal cation</name>
        <dbReference type="ChEBI" id="CHEBI:60240"/>
    </cofactor>
    <text evidence="1">Binds 1 divalent metal cation per subunit.</text>
</comment>
<comment type="pathway">
    <text evidence="1">Isoprenoid biosynthesis; isopentenyl diphosphate biosynthesis via DXP pathway; isopentenyl diphosphate from 1-deoxy-D-xylulose 5-phosphate: step 4/6.</text>
</comment>
<comment type="subunit">
    <text evidence="1">Homotrimer.</text>
</comment>
<comment type="similarity">
    <text evidence="1">Belongs to the IspF family.</text>
</comment>
<accession>Q8DHC4</accession>
<organism>
    <name type="scientific">Thermosynechococcus vestitus (strain NIES-2133 / IAM M-273 / BP-1)</name>
    <dbReference type="NCBI Taxonomy" id="197221"/>
    <lineage>
        <taxon>Bacteria</taxon>
        <taxon>Bacillati</taxon>
        <taxon>Cyanobacteriota</taxon>
        <taxon>Cyanophyceae</taxon>
        <taxon>Acaryochloridales</taxon>
        <taxon>Thermosynechococcaceae</taxon>
        <taxon>Thermosynechococcus</taxon>
    </lineage>
</organism>
<protein>
    <recommendedName>
        <fullName evidence="1">2-C-methyl-D-erythritol 2,4-cyclodiphosphate synthase</fullName>
        <shortName evidence="1">MECDP-synthase</shortName>
        <shortName evidence="1">MECPP-synthase</shortName>
        <shortName evidence="1">MECPS</shortName>
        <ecNumber evidence="1">4.6.1.12</ecNumber>
    </recommendedName>
</protein>
<dbReference type="EC" id="4.6.1.12" evidence="1"/>
<dbReference type="EMBL" id="BA000039">
    <property type="protein sequence ID" value="BAC09587.1"/>
    <property type="molecule type" value="Genomic_DNA"/>
</dbReference>
<dbReference type="RefSeq" id="NP_682825.1">
    <property type="nucleotide sequence ID" value="NC_004113.1"/>
</dbReference>
<dbReference type="SMR" id="Q8DHC4"/>
<dbReference type="STRING" id="197221.gene:10748644"/>
<dbReference type="EnsemblBacteria" id="BAC09587">
    <property type="protein sequence ID" value="BAC09587"/>
    <property type="gene ID" value="BAC09587"/>
</dbReference>
<dbReference type="KEGG" id="tel:tlr2035"/>
<dbReference type="PATRIC" id="fig|197221.4.peg.2130"/>
<dbReference type="eggNOG" id="COG0245">
    <property type="taxonomic scope" value="Bacteria"/>
</dbReference>
<dbReference type="UniPathway" id="UPA00056">
    <property type="reaction ID" value="UER00095"/>
</dbReference>
<dbReference type="Proteomes" id="UP000000440">
    <property type="component" value="Chromosome"/>
</dbReference>
<dbReference type="GO" id="GO:0008685">
    <property type="term" value="F:2-C-methyl-D-erythritol 2,4-cyclodiphosphate synthase activity"/>
    <property type="evidence" value="ECO:0007669"/>
    <property type="project" value="UniProtKB-UniRule"/>
</dbReference>
<dbReference type="GO" id="GO:0046872">
    <property type="term" value="F:metal ion binding"/>
    <property type="evidence" value="ECO:0007669"/>
    <property type="project" value="UniProtKB-KW"/>
</dbReference>
<dbReference type="GO" id="GO:0019288">
    <property type="term" value="P:isopentenyl diphosphate biosynthetic process, methylerythritol 4-phosphate pathway"/>
    <property type="evidence" value="ECO:0007669"/>
    <property type="project" value="UniProtKB-UniRule"/>
</dbReference>
<dbReference type="GO" id="GO:0016114">
    <property type="term" value="P:terpenoid biosynthetic process"/>
    <property type="evidence" value="ECO:0007669"/>
    <property type="project" value="InterPro"/>
</dbReference>
<dbReference type="CDD" id="cd00554">
    <property type="entry name" value="MECDP_synthase"/>
    <property type="match status" value="1"/>
</dbReference>
<dbReference type="FunFam" id="3.30.1330.50:FF:000001">
    <property type="entry name" value="2-C-methyl-D-erythritol 2,4-cyclodiphosphate synthase"/>
    <property type="match status" value="1"/>
</dbReference>
<dbReference type="Gene3D" id="3.30.1330.50">
    <property type="entry name" value="2-C-methyl-D-erythritol 2,4-cyclodiphosphate synthase"/>
    <property type="match status" value="1"/>
</dbReference>
<dbReference type="HAMAP" id="MF_00107">
    <property type="entry name" value="IspF"/>
    <property type="match status" value="1"/>
</dbReference>
<dbReference type="InterPro" id="IPR003526">
    <property type="entry name" value="MECDP_synthase"/>
</dbReference>
<dbReference type="InterPro" id="IPR020555">
    <property type="entry name" value="MECDP_synthase_CS"/>
</dbReference>
<dbReference type="InterPro" id="IPR036571">
    <property type="entry name" value="MECDP_synthase_sf"/>
</dbReference>
<dbReference type="NCBIfam" id="TIGR00151">
    <property type="entry name" value="ispF"/>
    <property type="match status" value="1"/>
</dbReference>
<dbReference type="PANTHER" id="PTHR43181">
    <property type="entry name" value="2-C-METHYL-D-ERYTHRITOL 2,4-CYCLODIPHOSPHATE SYNTHASE, CHLOROPLASTIC"/>
    <property type="match status" value="1"/>
</dbReference>
<dbReference type="PANTHER" id="PTHR43181:SF1">
    <property type="entry name" value="2-C-METHYL-D-ERYTHRITOL 2,4-CYCLODIPHOSPHATE SYNTHASE, CHLOROPLASTIC"/>
    <property type="match status" value="1"/>
</dbReference>
<dbReference type="Pfam" id="PF02542">
    <property type="entry name" value="YgbB"/>
    <property type="match status" value="1"/>
</dbReference>
<dbReference type="SUPFAM" id="SSF69765">
    <property type="entry name" value="IpsF-like"/>
    <property type="match status" value="1"/>
</dbReference>
<dbReference type="PROSITE" id="PS01350">
    <property type="entry name" value="ISPF"/>
    <property type="match status" value="1"/>
</dbReference>
<keyword id="KW-0414">Isoprene biosynthesis</keyword>
<keyword id="KW-0456">Lyase</keyword>
<keyword id="KW-0479">Metal-binding</keyword>
<keyword id="KW-1185">Reference proteome</keyword>
<gene>
    <name evidence="1" type="primary">ispF</name>
    <name type="ordered locus">tlr2035</name>
</gene>
<sequence length="161" mass="17323">MMKIRIGNGYDIHRLVPERPLILGGIRLEHACGLLGHSDADVLTHAIMDALLGALSLGDIGHYFPPSDPQWAGADSQVLLAKVAALIAERGWRVGNIDAVVVAERPKLKPYLDPMRDRLATTLGIDRDQISIKATTNEKLGPVGREEGIAAYAVALLQSGM</sequence>
<evidence type="ECO:0000255" key="1">
    <source>
        <dbReference type="HAMAP-Rule" id="MF_00107"/>
    </source>
</evidence>